<protein>
    <recommendedName>
        <fullName evidence="1">Protein RecA</fullName>
    </recommendedName>
    <alternativeName>
        <fullName evidence="1">Recombinase A</fullName>
    </alternativeName>
</protein>
<evidence type="ECO:0000255" key="1">
    <source>
        <dbReference type="HAMAP-Rule" id="MF_00268"/>
    </source>
</evidence>
<accession>B7J7A9</accession>
<gene>
    <name evidence="1" type="primary">recA</name>
    <name type="ordered locus">AFE_0932</name>
</gene>
<name>RECA_ACIF2</name>
<sequence>MDEQRSKALSAALSQIDKQFGKGAVMRLGDHNAIKDIEVYSTGSLGLDLALGVGGLPRGRVVEIYGPESSGKTTLTLHAIASCQAAGGTAAFIDAEHALDPGYAHKLGVDLENLLISQPDTGEQALEIADMLVRSGAVDLIVIDSVAALTPKAEIEGDMGDSHVGLQARLMSQALRKLTANISRTNTLVIFINQIRMKIGVMYGSPETTTGGNALKFYASVRLDIRRIGAIKKSDEVVGNDTRVKVVKNKVAPPFREAEFAIYYGEGISRLSELVDLGVKFDIVEKSGAWYSYQGERIGQGKDNARQYLKEHPELAANIEQRIRAAAAGHPLAFAEEVAEPAAVG</sequence>
<comment type="function">
    <text evidence="1">Can catalyze the hydrolysis of ATP in the presence of single-stranded DNA, the ATP-dependent uptake of single-stranded DNA by duplex DNA, and the ATP-dependent hybridization of homologous single-stranded DNAs. It interacts with LexA causing its activation and leading to its autocatalytic cleavage.</text>
</comment>
<comment type="subcellular location">
    <subcellularLocation>
        <location evidence="1">Cytoplasm</location>
    </subcellularLocation>
</comment>
<comment type="similarity">
    <text evidence="1">Belongs to the RecA family.</text>
</comment>
<keyword id="KW-0067">ATP-binding</keyword>
<keyword id="KW-0963">Cytoplasm</keyword>
<keyword id="KW-0227">DNA damage</keyword>
<keyword id="KW-0233">DNA recombination</keyword>
<keyword id="KW-0234">DNA repair</keyword>
<keyword id="KW-0238">DNA-binding</keyword>
<keyword id="KW-0547">Nucleotide-binding</keyword>
<keyword id="KW-1185">Reference proteome</keyword>
<keyword id="KW-0742">SOS response</keyword>
<reference key="1">
    <citation type="journal article" date="2008" name="BMC Genomics">
        <title>Acidithiobacillus ferrooxidans metabolism: from genome sequence to industrial applications.</title>
        <authorList>
            <person name="Valdes J."/>
            <person name="Pedroso I."/>
            <person name="Quatrini R."/>
            <person name="Dodson R.J."/>
            <person name="Tettelin H."/>
            <person name="Blake R. II"/>
            <person name="Eisen J.A."/>
            <person name="Holmes D.S."/>
        </authorList>
    </citation>
    <scope>NUCLEOTIDE SEQUENCE [LARGE SCALE GENOMIC DNA]</scope>
    <source>
        <strain>ATCC 23270 / DSM 14882 / CIP 104768 / NCIMB 8455</strain>
    </source>
</reference>
<dbReference type="EMBL" id="CP001219">
    <property type="protein sequence ID" value="ACK78790.1"/>
    <property type="molecule type" value="Genomic_DNA"/>
</dbReference>
<dbReference type="RefSeq" id="WP_012536446.1">
    <property type="nucleotide sequence ID" value="NC_011761.1"/>
</dbReference>
<dbReference type="SMR" id="B7J7A9"/>
<dbReference type="STRING" id="243159.AFE_0932"/>
<dbReference type="PaxDb" id="243159-AFE_0932"/>
<dbReference type="GeneID" id="65280253"/>
<dbReference type="KEGG" id="afr:AFE_0932"/>
<dbReference type="eggNOG" id="COG0468">
    <property type="taxonomic scope" value="Bacteria"/>
</dbReference>
<dbReference type="HOGENOM" id="CLU_040469_3_2_6"/>
<dbReference type="Proteomes" id="UP000001362">
    <property type="component" value="Chromosome"/>
</dbReference>
<dbReference type="GO" id="GO:0005829">
    <property type="term" value="C:cytosol"/>
    <property type="evidence" value="ECO:0007669"/>
    <property type="project" value="TreeGrafter"/>
</dbReference>
<dbReference type="GO" id="GO:0005524">
    <property type="term" value="F:ATP binding"/>
    <property type="evidence" value="ECO:0007669"/>
    <property type="project" value="UniProtKB-UniRule"/>
</dbReference>
<dbReference type="GO" id="GO:0016887">
    <property type="term" value="F:ATP hydrolysis activity"/>
    <property type="evidence" value="ECO:0007669"/>
    <property type="project" value="InterPro"/>
</dbReference>
<dbReference type="GO" id="GO:0140664">
    <property type="term" value="F:ATP-dependent DNA damage sensor activity"/>
    <property type="evidence" value="ECO:0007669"/>
    <property type="project" value="InterPro"/>
</dbReference>
<dbReference type="GO" id="GO:0003684">
    <property type="term" value="F:damaged DNA binding"/>
    <property type="evidence" value="ECO:0007669"/>
    <property type="project" value="UniProtKB-UniRule"/>
</dbReference>
<dbReference type="GO" id="GO:0003697">
    <property type="term" value="F:single-stranded DNA binding"/>
    <property type="evidence" value="ECO:0007669"/>
    <property type="project" value="UniProtKB-UniRule"/>
</dbReference>
<dbReference type="GO" id="GO:0006310">
    <property type="term" value="P:DNA recombination"/>
    <property type="evidence" value="ECO:0007669"/>
    <property type="project" value="UniProtKB-UniRule"/>
</dbReference>
<dbReference type="GO" id="GO:0006281">
    <property type="term" value="P:DNA repair"/>
    <property type="evidence" value="ECO:0007669"/>
    <property type="project" value="UniProtKB-UniRule"/>
</dbReference>
<dbReference type="GO" id="GO:0009432">
    <property type="term" value="P:SOS response"/>
    <property type="evidence" value="ECO:0007669"/>
    <property type="project" value="UniProtKB-UniRule"/>
</dbReference>
<dbReference type="CDD" id="cd00983">
    <property type="entry name" value="RecA"/>
    <property type="match status" value="1"/>
</dbReference>
<dbReference type="FunFam" id="3.40.50.300:FF:000087">
    <property type="entry name" value="Recombinase RecA"/>
    <property type="match status" value="1"/>
</dbReference>
<dbReference type="Gene3D" id="3.40.50.300">
    <property type="entry name" value="P-loop containing nucleotide triphosphate hydrolases"/>
    <property type="match status" value="1"/>
</dbReference>
<dbReference type="HAMAP" id="MF_00268">
    <property type="entry name" value="RecA"/>
    <property type="match status" value="1"/>
</dbReference>
<dbReference type="InterPro" id="IPR003593">
    <property type="entry name" value="AAA+_ATPase"/>
</dbReference>
<dbReference type="InterPro" id="IPR013765">
    <property type="entry name" value="DNA_recomb/repair_RecA"/>
</dbReference>
<dbReference type="InterPro" id="IPR020584">
    <property type="entry name" value="DNA_recomb/repair_RecA_CS"/>
</dbReference>
<dbReference type="InterPro" id="IPR027417">
    <property type="entry name" value="P-loop_NTPase"/>
</dbReference>
<dbReference type="InterPro" id="IPR049261">
    <property type="entry name" value="RecA-like_C"/>
</dbReference>
<dbReference type="InterPro" id="IPR049428">
    <property type="entry name" value="RecA-like_N"/>
</dbReference>
<dbReference type="InterPro" id="IPR020588">
    <property type="entry name" value="RecA_ATP-bd"/>
</dbReference>
<dbReference type="InterPro" id="IPR023400">
    <property type="entry name" value="RecA_C_sf"/>
</dbReference>
<dbReference type="InterPro" id="IPR020587">
    <property type="entry name" value="RecA_monomer-monomer_interface"/>
</dbReference>
<dbReference type="NCBIfam" id="TIGR02012">
    <property type="entry name" value="tigrfam_recA"/>
    <property type="match status" value="1"/>
</dbReference>
<dbReference type="PANTHER" id="PTHR45900:SF1">
    <property type="entry name" value="MITOCHONDRIAL DNA REPAIR PROTEIN RECA HOMOLOG-RELATED"/>
    <property type="match status" value="1"/>
</dbReference>
<dbReference type="PANTHER" id="PTHR45900">
    <property type="entry name" value="RECA"/>
    <property type="match status" value="1"/>
</dbReference>
<dbReference type="Pfam" id="PF00154">
    <property type="entry name" value="RecA"/>
    <property type="match status" value="1"/>
</dbReference>
<dbReference type="Pfam" id="PF21096">
    <property type="entry name" value="RecA_C"/>
    <property type="match status" value="1"/>
</dbReference>
<dbReference type="PRINTS" id="PR00142">
    <property type="entry name" value="RECA"/>
</dbReference>
<dbReference type="SMART" id="SM00382">
    <property type="entry name" value="AAA"/>
    <property type="match status" value="1"/>
</dbReference>
<dbReference type="SUPFAM" id="SSF52540">
    <property type="entry name" value="P-loop containing nucleoside triphosphate hydrolases"/>
    <property type="match status" value="1"/>
</dbReference>
<dbReference type="SUPFAM" id="SSF54752">
    <property type="entry name" value="RecA protein, C-terminal domain"/>
    <property type="match status" value="1"/>
</dbReference>
<dbReference type="PROSITE" id="PS00321">
    <property type="entry name" value="RECA_1"/>
    <property type="match status" value="1"/>
</dbReference>
<dbReference type="PROSITE" id="PS50162">
    <property type="entry name" value="RECA_2"/>
    <property type="match status" value="1"/>
</dbReference>
<dbReference type="PROSITE" id="PS50163">
    <property type="entry name" value="RECA_3"/>
    <property type="match status" value="1"/>
</dbReference>
<organism>
    <name type="scientific">Acidithiobacillus ferrooxidans (strain ATCC 23270 / DSM 14882 / CIP 104768 / NCIMB 8455)</name>
    <name type="common">Ferrobacillus ferrooxidans (strain ATCC 23270)</name>
    <dbReference type="NCBI Taxonomy" id="243159"/>
    <lineage>
        <taxon>Bacteria</taxon>
        <taxon>Pseudomonadati</taxon>
        <taxon>Pseudomonadota</taxon>
        <taxon>Acidithiobacillia</taxon>
        <taxon>Acidithiobacillales</taxon>
        <taxon>Acidithiobacillaceae</taxon>
        <taxon>Acidithiobacillus</taxon>
    </lineage>
</organism>
<feature type="chain" id="PRO_1000193281" description="Protein RecA">
    <location>
        <begin position="1"/>
        <end position="345"/>
    </location>
</feature>
<feature type="binding site" evidence="1">
    <location>
        <begin position="66"/>
        <end position="73"/>
    </location>
    <ligand>
        <name>ATP</name>
        <dbReference type="ChEBI" id="CHEBI:30616"/>
    </ligand>
</feature>
<proteinExistence type="inferred from homology"/>